<comment type="function">
    <text evidence="1">Excises uracil residues from the DNA which can arise as a result of misincorporation of dUMP residues by DNA polymerase or due to deamination of cytosine.</text>
</comment>
<comment type="catalytic activity">
    <reaction evidence="1">
        <text>Hydrolyzes single-stranded DNA or mismatched double-stranded DNA and polynucleotides, releasing free uracil.</text>
        <dbReference type="EC" id="3.2.2.27"/>
    </reaction>
</comment>
<comment type="subcellular location">
    <subcellularLocation>
        <location evidence="1">Cytoplasm</location>
    </subcellularLocation>
</comment>
<comment type="similarity">
    <text evidence="1">Belongs to the uracil-DNA glycosylase (UDG) superfamily. UNG family.</text>
</comment>
<name>UNG_CAMLR</name>
<organism>
    <name type="scientific">Campylobacter lari (strain RM2100 / D67 / ATCC BAA-1060)</name>
    <dbReference type="NCBI Taxonomy" id="306263"/>
    <lineage>
        <taxon>Bacteria</taxon>
        <taxon>Pseudomonadati</taxon>
        <taxon>Campylobacterota</taxon>
        <taxon>Epsilonproteobacteria</taxon>
        <taxon>Campylobacterales</taxon>
        <taxon>Campylobacteraceae</taxon>
        <taxon>Campylobacter</taxon>
    </lineage>
</organism>
<proteinExistence type="inferred from homology"/>
<sequence>MDICLEKIKIEQTWKEFLKDEFLKPYFLEIKTHYINALNEGKTIYPPANLIFNAFNLAPLQDLKIILLGQDPYHNPHQAMGLSFSVPMGVKIPPSLLNIYKELQNDLNIPMAKHGDLSKWAKQGVLLLNSILSVEANKPASHAHFGWQKFTDAVISKLSDEKEGLVFLLWGNYAKNKKVLINPQKHFILEAAHPSPLARNAFLGCKHFSKSNEILLKLGKSPIDWNLNL</sequence>
<evidence type="ECO:0000255" key="1">
    <source>
        <dbReference type="HAMAP-Rule" id="MF_00148"/>
    </source>
</evidence>
<gene>
    <name evidence="1" type="primary">ung</name>
    <name type="ordered locus">Cla_0126</name>
</gene>
<reference key="1">
    <citation type="journal article" date="2008" name="Foodborne Pathog. Dis.">
        <title>The complete genome sequence and analysis of the human pathogen Campylobacter lari.</title>
        <authorList>
            <person name="Miller W.G."/>
            <person name="Wang G."/>
            <person name="Binnewies T.T."/>
            <person name="Parker C.T."/>
        </authorList>
    </citation>
    <scope>NUCLEOTIDE SEQUENCE [LARGE SCALE GENOMIC DNA]</scope>
    <source>
        <strain>RM2100 / D67 / ATCC BAA-1060</strain>
    </source>
</reference>
<accession>B9KEK7</accession>
<feature type="chain" id="PRO_1000199774" description="Uracil-DNA glycosylase">
    <location>
        <begin position="1"/>
        <end position="229"/>
    </location>
</feature>
<feature type="active site" description="Proton acceptor" evidence="1">
    <location>
        <position position="71"/>
    </location>
</feature>
<dbReference type="EC" id="3.2.2.27" evidence="1"/>
<dbReference type="EMBL" id="CP000932">
    <property type="protein sequence ID" value="ACM63492.1"/>
    <property type="molecule type" value="Genomic_DNA"/>
</dbReference>
<dbReference type="RefSeq" id="WP_012660877.1">
    <property type="nucleotide sequence ID" value="NC_012039.1"/>
</dbReference>
<dbReference type="SMR" id="B9KEK7"/>
<dbReference type="STRING" id="306263.Cla_0126"/>
<dbReference type="KEGG" id="cla:CLA_0126"/>
<dbReference type="PATRIC" id="fig|306263.5.peg.126"/>
<dbReference type="eggNOG" id="COG0692">
    <property type="taxonomic scope" value="Bacteria"/>
</dbReference>
<dbReference type="HOGENOM" id="CLU_032162_3_0_7"/>
<dbReference type="Proteomes" id="UP000007727">
    <property type="component" value="Chromosome"/>
</dbReference>
<dbReference type="GO" id="GO:0005737">
    <property type="term" value="C:cytoplasm"/>
    <property type="evidence" value="ECO:0007669"/>
    <property type="project" value="UniProtKB-SubCell"/>
</dbReference>
<dbReference type="GO" id="GO:0004844">
    <property type="term" value="F:uracil DNA N-glycosylase activity"/>
    <property type="evidence" value="ECO:0007669"/>
    <property type="project" value="UniProtKB-UniRule"/>
</dbReference>
<dbReference type="GO" id="GO:0097510">
    <property type="term" value="P:base-excision repair, AP site formation via deaminated base removal"/>
    <property type="evidence" value="ECO:0007669"/>
    <property type="project" value="TreeGrafter"/>
</dbReference>
<dbReference type="CDD" id="cd10027">
    <property type="entry name" value="UDG-F1-like"/>
    <property type="match status" value="1"/>
</dbReference>
<dbReference type="FunFam" id="3.40.470.10:FF:000001">
    <property type="entry name" value="Uracil-DNA glycosylase"/>
    <property type="match status" value="1"/>
</dbReference>
<dbReference type="Gene3D" id="3.40.470.10">
    <property type="entry name" value="Uracil-DNA glycosylase-like domain"/>
    <property type="match status" value="1"/>
</dbReference>
<dbReference type="HAMAP" id="MF_00148">
    <property type="entry name" value="UDG"/>
    <property type="match status" value="1"/>
</dbReference>
<dbReference type="InterPro" id="IPR002043">
    <property type="entry name" value="UDG_fam1"/>
</dbReference>
<dbReference type="InterPro" id="IPR018085">
    <property type="entry name" value="Ura-DNA_Glyclase_AS"/>
</dbReference>
<dbReference type="InterPro" id="IPR005122">
    <property type="entry name" value="Uracil-DNA_glycosylase-like"/>
</dbReference>
<dbReference type="InterPro" id="IPR036895">
    <property type="entry name" value="Uracil-DNA_glycosylase-like_sf"/>
</dbReference>
<dbReference type="NCBIfam" id="NF003588">
    <property type="entry name" value="PRK05254.1-1"/>
    <property type="match status" value="1"/>
</dbReference>
<dbReference type="NCBIfam" id="NF003589">
    <property type="entry name" value="PRK05254.1-2"/>
    <property type="match status" value="1"/>
</dbReference>
<dbReference type="NCBIfam" id="NF003591">
    <property type="entry name" value="PRK05254.1-4"/>
    <property type="match status" value="1"/>
</dbReference>
<dbReference type="NCBIfam" id="NF003592">
    <property type="entry name" value="PRK05254.1-5"/>
    <property type="match status" value="1"/>
</dbReference>
<dbReference type="NCBIfam" id="TIGR00628">
    <property type="entry name" value="ung"/>
    <property type="match status" value="1"/>
</dbReference>
<dbReference type="PANTHER" id="PTHR11264">
    <property type="entry name" value="URACIL-DNA GLYCOSYLASE"/>
    <property type="match status" value="1"/>
</dbReference>
<dbReference type="PANTHER" id="PTHR11264:SF0">
    <property type="entry name" value="URACIL-DNA GLYCOSYLASE"/>
    <property type="match status" value="1"/>
</dbReference>
<dbReference type="Pfam" id="PF03167">
    <property type="entry name" value="UDG"/>
    <property type="match status" value="1"/>
</dbReference>
<dbReference type="SMART" id="SM00986">
    <property type="entry name" value="UDG"/>
    <property type="match status" value="1"/>
</dbReference>
<dbReference type="SMART" id="SM00987">
    <property type="entry name" value="UreE_C"/>
    <property type="match status" value="1"/>
</dbReference>
<dbReference type="SUPFAM" id="SSF52141">
    <property type="entry name" value="Uracil-DNA glycosylase-like"/>
    <property type="match status" value="1"/>
</dbReference>
<dbReference type="PROSITE" id="PS00130">
    <property type="entry name" value="U_DNA_GLYCOSYLASE"/>
    <property type="match status" value="1"/>
</dbReference>
<protein>
    <recommendedName>
        <fullName evidence="1">Uracil-DNA glycosylase</fullName>
        <shortName evidence="1">UDG</shortName>
        <ecNumber evidence="1">3.2.2.27</ecNumber>
    </recommendedName>
</protein>
<keyword id="KW-0963">Cytoplasm</keyword>
<keyword id="KW-0227">DNA damage</keyword>
<keyword id="KW-0234">DNA repair</keyword>
<keyword id="KW-0378">Hydrolase</keyword>
<keyword id="KW-1185">Reference proteome</keyword>